<comment type="function">
    <text evidence="1">Transfers the 4'-phosphopantetheine moiety from coenzyme A to a Ser of acyl-carrier-protein.</text>
</comment>
<comment type="catalytic activity">
    <reaction evidence="1">
        <text>apo-[ACP] + CoA = holo-[ACP] + adenosine 3',5'-bisphosphate + H(+)</text>
        <dbReference type="Rhea" id="RHEA:12068"/>
        <dbReference type="Rhea" id="RHEA-COMP:9685"/>
        <dbReference type="Rhea" id="RHEA-COMP:9690"/>
        <dbReference type="ChEBI" id="CHEBI:15378"/>
        <dbReference type="ChEBI" id="CHEBI:29999"/>
        <dbReference type="ChEBI" id="CHEBI:57287"/>
        <dbReference type="ChEBI" id="CHEBI:58343"/>
        <dbReference type="ChEBI" id="CHEBI:64479"/>
        <dbReference type="EC" id="2.7.8.7"/>
    </reaction>
</comment>
<comment type="cofactor">
    <cofactor evidence="1">
        <name>Mg(2+)</name>
        <dbReference type="ChEBI" id="CHEBI:18420"/>
    </cofactor>
</comment>
<comment type="subcellular location">
    <subcellularLocation>
        <location evidence="1">Cytoplasm</location>
    </subcellularLocation>
</comment>
<comment type="similarity">
    <text evidence="1">Belongs to the P-Pant transferase superfamily. AcpS family.</text>
</comment>
<name>ACPS_SHEB9</name>
<keyword id="KW-0963">Cytoplasm</keyword>
<keyword id="KW-0275">Fatty acid biosynthesis</keyword>
<keyword id="KW-0276">Fatty acid metabolism</keyword>
<keyword id="KW-0444">Lipid biosynthesis</keyword>
<keyword id="KW-0443">Lipid metabolism</keyword>
<keyword id="KW-0460">Magnesium</keyword>
<keyword id="KW-0479">Metal-binding</keyword>
<keyword id="KW-0808">Transferase</keyword>
<gene>
    <name evidence="1" type="primary">acpS</name>
    <name type="ordered locus">Sbal195_1282</name>
</gene>
<feature type="chain" id="PRO_1000075660" description="Holo-[acyl-carrier-protein] synthase">
    <location>
        <begin position="1"/>
        <end position="127"/>
    </location>
</feature>
<feature type="binding site" evidence="1">
    <location>
        <position position="9"/>
    </location>
    <ligand>
        <name>Mg(2+)</name>
        <dbReference type="ChEBI" id="CHEBI:18420"/>
    </ligand>
</feature>
<feature type="binding site" evidence="1">
    <location>
        <position position="58"/>
    </location>
    <ligand>
        <name>Mg(2+)</name>
        <dbReference type="ChEBI" id="CHEBI:18420"/>
    </ligand>
</feature>
<proteinExistence type="inferred from homology"/>
<reference key="1">
    <citation type="submission" date="2007-11" db="EMBL/GenBank/DDBJ databases">
        <title>Complete sequence of chromosome of Shewanella baltica OS195.</title>
        <authorList>
            <consortium name="US DOE Joint Genome Institute"/>
            <person name="Copeland A."/>
            <person name="Lucas S."/>
            <person name="Lapidus A."/>
            <person name="Barry K."/>
            <person name="Glavina del Rio T."/>
            <person name="Dalin E."/>
            <person name="Tice H."/>
            <person name="Pitluck S."/>
            <person name="Chain P."/>
            <person name="Malfatti S."/>
            <person name="Shin M."/>
            <person name="Vergez L."/>
            <person name="Schmutz J."/>
            <person name="Larimer F."/>
            <person name="Land M."/>
            <person name="Hauser L."/>
            <person name="Kyrpides N."/>
            <person name="Kim E."/>
            <person name="Brettar I."/>
            <person name="Rodrigues J."/>
            <person name="Konstantinidis K."/>
            <person name="Klappenbach J."/>
            <person name="Hofle M."/>
            <person name="Tiedje J."/>
            <person name="Richardson P."/>
        </authorList>
    </citation>
    <scope>NUCLEOTIDE SEQUENCE [LARGE SCALE GENOMIC DNA]</scope>
    <source>
        <strain>OS195</strain>
    </source>
</reference>
<protein>
    <recommendedName>
        <fullName evidence="1">Holo-[acyl-carrier-protein] synthase</fullName>
        <shortName evidence="1">Holo-ACP synthase</shortName>
        <ecNumber evidence="1">2.7.8.7</ecNumber>
    </recommendedName>
    <alternativeName>
        <fullName evidence="1">4'-phosphopantetheinyl transferase AcpS</fullName>
    </alternativeName>
</protein>
<accession>A9L5P0</accession>
<sequence>MAIVGLGTDIVEIERIQAHVARAGNKLAKRVLTEAELAIYTAHSQPSRYLAKRFAAKEAAAKALGTGIGRGVSFQHIHIGNNEDGAPTIHFTEGALARLQQLKATVGHISIADEKSYAIVTVIIESQ</sequence>
<evidence type="ECO:0000255" key="1">
    <source>
        <dbReference type="HAMAP-Rule" id="MF_00101"/>
    </source>
</evidence>
<dbReference type="EC" id="2.7.8.7" evidence="1"/>
<dbReference type="EMBL" id="CP000891">
    <property type="protein sequence ID" value="ABX48457.1"/>
    <property type="molecule type" value="Genomic_DNA"/>
</dbReference>
<dbReference type="RefSeq" id="WP_006085070.1">
    <property type="nucleotide sequence ID" value="NC_009997.1"/>
</dbReference>
<dbReference type="SMR" id="A9L5P0"/>
<dbReference type="GeneID" id="11771550"/>
<dbReference type="KEGG" id="sbn:Sbal195_1282"/>
<dbReference type="HOGENOM" id="CLU_089696_3_1_6"/>
<dbReference type="Proteomes" id="UP000000770">
    <property type="component" value="Chromosome"/>
</dbReference>
<dbReference type="GO" id="GO:0005737">
    <property type="term" value="C:cytoplasm"/>
    <property type="evidence" value="ECO:0007669"/>
    <property type="project" value="UniProtKB-SubCell"/>
</dbReference>
<dbReference type="GO" id="GO:0008897">
    <property type="term" value="F:holo-[acyl-carrier-protein] synthase activity"/>
    <property type="evidence" value="ECO:0007669"/>
    <property type="project" value="UniProtKB-UniRule"/>
</dbReference>
<dbReference type="GO" id="GO:0000287">
    <property type="term" value="F:magnesium ion binding"/>
    <property type="evidence" value="ECO:0007669"/>
    <property type="project" value="UniProtKB-UniRule"/>
</dbReference>
<dbReference type="GO" id="GO:0006633">
    <property type="term" value="P:fatty acid biosynthetic process"/>
    <property type="evidence" value="ECO:0007669"/>
    <property type="project" value="UniProtKB-UniRule"/>
</dbReference>
<dbReference type="FunFam" id="3.90.470.20:FF:000001">
    <property type="entry name" value="Holo-[acyl-carrier-protein] synthase"/>
    <property type="match status" value="1"/>
</dbReference>
<dbReference type="Gene3D" id="3.90.470.20">
    <property type="entry name" value="4'-phosphopantetheinyl transferase domain"/>
    <property type="match status" value="1"/>
</dbReference>
<dbReference type="HAMAP" id="MF_00101">
    <property type="entry name" value="AcpS"/>
    <property type="match status" value="1"/>
</dbReference>
<dbReference type="InterPro" id="IPR008278">
    <property type="entry name" value="4-PPantetheinyl_Trfase_dom"/>
</dbReference>
<dbReference type="InterPro" id="IPR037143">
    <property type="entry name" value="4-PPantetheinyl_Trfase_dom_sf"/>
</dbReference>
<dbReference type="InterPro" id="IPR002582">
    <property type="entry name" value="ACPS"/>
</dbReference>
<dbReference type="InterPro" id="IPR004568">
    <property type="entry name" value="Ppantetheine-prot_Trfase_dom"/>
</dbReference>
<dbReference type="NCBIfam" id="TIGR00516">
    <property type="entry name" value="acpS"/>
    <property type="match status" value="1"/>
</dbReference>
<dbReference type="NCBIfam" id="TIGR00556">
    <property type="entry name" value="pantethn_trn"/>
    <property type="match status" value="1"/>
</dbReference>
<dbReference type="Pfam" id="PF01648">
    <property type="entry name" value="ACPS"/>
    <property type="match status" value="1"/>
</dbReference>
<dbReference type="SUPFAM" id="SSF56214">
    <property type="entry name" value="4'-phosphopantetheinyl transferase"/>
    <property type="match status" value="1"/>
</dbReference>
<organism>
    <name type="scientific">Shewanella baltica (strain OS195)</name>
    <dbReference type="NCBI Taxonomy" id="399599"/>
    <lineage>
        <taxon>Bacteria</taxon>
        <taxon>Pseudomonadati</taxon>
        <taxon>Pseudomonadota</taxon>
        <taxon>Gammaproteobacteria</taxon>
        <taxon>Alteromonadales</taxon>
        <taxon>Shewanellaceae</taxon>
        <taxon>Shewanella</taxon>
    </lineage>
</organism>